<dbReference type="EMBL" id="AL123456">
    <property type="protein sequence ID" value="CCP44043.1"/>
    <property type="molecule type" value="Genomic_DNA"/>
</dbReference>
<dbReference type="PIR" id="C70772">
    <property type="entry name" value="C70772"/>
</dbReference>
<dbReference type="RefSeq" id="NP_215803.1">
    <property type="nucleotide sequence ID" value="NC_000962.3"/>
</dbReference>
<dbReference type="RefSeq" id="WP_003406624.1">
    <property type="nucleotide sequence ID" value="NZ_NVQJ01000030.1"/>
</dbReference>
<dbReference type="SMR" id="P9WME3"/>
<dbReference type="FunCoup" id="P9WME3">
    <property type="interactions" value="14"/>
</dbReference>
<dbReference type="STRING" id="83332.Rv1287"/>
<dbReference type="PaxDb" id="83332-Rv1287"/>
<dbReference type="DNASU" id="886998"/>
<dbReference type="GeneID" id="886998"/>
<dbReference type="KEGG" id="mtu:Rv1287"/>
<dbReference type="KEGG" id="mtv:RVBD_1287"/>
<dbReference type="TubercuList" id="Rv1287"/>
<dbReference type="eggNOG" id="COG1959">
    <property type="taxonomic scope" value="Bacteria"/>
</dbReference>
<dbReference type="InParanoid" id="P9WME3"/>
<dbReference type="OrthoDB" id="9808360at2"/>
<dbReference type="PhylomeDB" id="P9WME3"/>
<dbReference type="Proteomes" id="UP000001584">
    <property type="component" value="Chromosome"/>
</dbReference>
<dbReference type="GO" id="GO:0005829">
    <property type="term" value="C:cytosol"/>
    <property type="evidence" value="ECO:0000318"/>
    <property type="project" value="GO_Central"/>
</dbReference>
<dbReference type="GO" id="GO:0003677">
    <property type="term" value="F:DNA binding"/>
    <property type="evidence" value="ECO:0007669"/>
    <property type="project" value="UniProtKB-KW"/>
</dbReference>
<dbReference type="GO" id="GO:0003700">
    <property type="term" value="F:DNA-binding transcription factor activity"/>
    <property type="evidence" value="ECO:0000318"/>
    <property type="project" value="GO_Central"/>
</dbReference>
<dbReference type="GO" id="GO:0006355">
    <property type="term" value="P:regulation of DNA-templated transcription"/>
    <property type="evidence" value="ECO:0000318"/>
    <property type="project" value="GO_Central"/>
</dbReference>
<dbReference type="FunFam" id="1.10.10.10:FF:000444">
    <property type="entry name" value="Rrf2 family transcriptional regulator"/>
    <property type="match status" value="1"/>
</dbReference>
<dbReference type="Gene3D" id="1.10.10.10">
    <property type="entry name" value="Winged helix-like DNA-binding domain superfamily/Winged helix DNA-binding domain"/>
    <property type="match status" value="1"/>
</dbReference>
<dbReference type="InterPro" id="IPR030489">
    <property type="entry name" value="TR_Rrf2-type_CS"/>
</dbReference>
<dbReference type="InterPro" id="IPR000944">
    <property type="entry name" value="Tscrpt_reg_Rrf2"/>
</dbReference>
<dbReference type="InterPro" id="IPR036388">
    <property type="entry name" value="WH-like_DNA-bd_sf"/>
</dbReference>
<dbReference type="InterPro" id="IPR036390">
    <property type="entry name" value="WH_DNA-bd_sf"/>
</dbReference>
<dbReference type="NCBIfam" id="TIGR00738">
    <property type="entry name" value="rrf2_super"/>
    <property type="match status" value="1"/>
</dbReference>
<dbReference type="PANTHER" id="PTHR33221:SF5">
    <property type="entry name" value="HTH-TYPE TRANSCRIPTIONAL REGULATOR ISCR"/>
    <property type="match status" value="1"/>
</dbReference>
<dbReference type="PANTHER" id="PTHR33221">
    <property type="entry name" value="WINGED HELIX-TURN-HELIX TRANSCRIPTIONAL REGULATOR, RRF2 FAMILY"/>
    <property type="match status" value="1"/>
</dbReference>
<dbReference type="Pfam" id="PF02082">
    <property type="entry name" value="Rrf2"/>
    <property type="match status" value="1"/>
</dbReference>
<dbReference type="SUPFAM" id="SSF46785">
    <property type="entry name" value="Winged helix' DNA-binding domain"/>
    <property type="match status" value="1"/>
</dbReference>
<dbReference type="PROSITE" id="PS01332">
    <property type="entry name" value="HTH_RRF2_1"/>
    <property type="match status" value="1"/>
</dbReference>
<dbReference type="PROSITE" id="PS51197">
    <property type="entry name" value="HTH_RRF2_2"/>
    <property type="match status" value="1"/>
</dbReference>
<evidence type="ECO:0000255" key="1">
    <source>
        <dbReference type="PROSITE-ProRule" id="PRU00540"/>
    </source>
</evidence>
<organism>
    <name type="scientific">Mycobacterium tuberculosis (strain ATCC 25618 / H37Rv)</name>
    <dbReference type="NCBI Taxonomy" id="83332"/>
    <lineage>
        <taxon>Bacteria</taxon>
        <taxon>Bacillati</taxon>
        <taxon>Actinomycetota</taxon>
        <taxon>Actinomycetes</taxon>
        <taxon>Mycobacteriales</taxon>
        <taxon>Mycobacteriaceae</taxon>
        <taxon>Mycobacterium</taxon>
        <taxon>Mycobacterium tuberculosis complex</taxon>
    </lineage>
</organism>
<name>Y1287_MYCTU</name>
<feature type="chain" id="PRO_0000036205" description="Putative HTH-type transcriptional regulator Rv1287">
    <location>
        <begin position="1"/>
        <end position="161"/>
    </location>
</feature>
<feature type="domain" description="HTH rrf2-type" evidence="1">
    <location>
        <begin position="2"/>
        <end position="132"/>
    </location>
</feature>
<accession>P9WME3</accession>
<accession>L0T970</accession>
<accession>P67159</accession>
<accession>Q10613</accession>
<keyword id="KW-0238">DNA-binding</keyword>
<keyword id="KW-1185">Reference proteome</keyword>
<sequence>MRMSAKAEYAVRAMVQLATAASGTVVKTDDLAAAQGIPPQFLVDILTNLRTDRLVRSHRGREGGYELARPGTEISIADVLRCIDGPLASVRDIGLGDLPYSGPTTALTDVWRALRASMRSVLEETTLADVAGGALPEHVAQLADDYRAQESTRHGASRHGD</sequence>
<gene>
    <name type="ordered locus">Rv1287</name>
    <name type="ORF">MTCY373.06</name>
</gene>
<reference key="1">
    <citation type="journal article" date="1998" name="Nature">
        <title>Deciphering the biology of Mycobacterium tuberculosis from the complete genome sequence.</title>
        <authorList>
            <person name="Cole S.T."/>
            <person name="Brosch R."/>
            <person name="Parkhill J."/>
            <person name="Garnier T."/>
            <person name="Churcher C.M."/>
            <person name="Harris D.E."/>
            <person name="Gordon S.V."/>
            <person name="Eiglmeier K."/>
            <person name="Gas S."/>
            <person name="Barry C.E. III"/>
            <person name="Tekaia F."/>
            <person name="Badcock K."/>
            <person name="Basham D."/>
            <person name="Brown D."/>
            <person name="Chillingworth T."/>
            <person name="Connor R."/>
            <person name="Davies R.M."/>
            <person name="Devlin K."/>
            <person name="Feltwell T."/>
            <person name="Gentles S."/>
            <person name="Hamlin N."/>
            <person name="Holroyd S."/>
            <person name="Hornsby T."/>
            <person name="Jagels K."/>
            <person name="Krogh A."/>
            <person name="McLean J."/>
            <person name="Moule S."/>
            <person name="Murphy L.D."/>
            <person name="Oliver S."/>
            <person name="Osborne J."/>
            <person name="Quail M.A."/>
            <person name="Rajandream M.A."/>
            <person name="Rogers J."/>
            <person name="Rutter S."/>
            <person name="Seeger K."/>
            <person name="Skelton S."/>
            <person name="Squares S."/>
            <person name="Squares R."/>
            <person name="Sulston J.E."/>
            <person name="Taylor K."/>
            <person name="Whitehead S."/>
            <person name="Barrell B.G."/>
        </authorList>
    </citation>
    <scope>NUCLEOTIDE SEQUENCE [LARGE SCALE GENOMIC DNA]</scope>
    <source>
        <strain>ATCC 25618 / H37Rv</strain>
    </source>
</reference>
<reference key="2">
    <citation type="journal article" date="2008" name="BMC Syst. Biol.">
        <title>targetTB: a target identification pipeline for Mycobacterium tuberculosis through an interactome, reactome and genome-scale structural analysis.</title>
        <authorList>
            <person name="Raman K."/>
            <person name="Yeturu K."/>
            <person name="Chandra N."/>
        </authorList>
    </citation>
    <scope>IDENTIFICATION AS A DRUG TARGET [LARGE SCALE ANALYSIS]</scope>
</reference>
<reference key="3">
    <citation type="journal article" date="2011" name="Mol. Cell. Proteomics">
        <title>Proteogenomic analysis of Mycobacterium tuberculosis by high resolution mass spectrometry.</title>
        <authorList>
            <person name="Kelkar D.S."/>
            <person name="Kumar D."/>
            <person name="Kumar P."/>
            <person name="Balakrishnan L."/>
            <person name="Muthusamy B."/>
            <person name="Yadav A.K."/>
            <person name="Shrivastava P."/>
            <person name="Marimuthu A."/>
            <person name="Anand S."/>
            <person name="Sundaram H."/>
            <person name="Kingsbury R."/>
            <person name="Harsha H.C."/>
            <person name="Nair B."/>
            <person name="Prasad T.S."/>
            <person name="Chauhan D.S."/>
            <person name="Katoch K."/>
            <person name="Katoch V.M."/>
            <person name="Kumar P."/>
            <person name="Chaerkady R."/>
            <person name="Ramachandran S."/>
            <person name="Dash D."/>
            <person name="Pandey A."/>
        </authorList>
    </citation>
    <scope>IDENTIFICATION BY MASS SPECTROMETRY [LARGE SCALE ANALYSIS]</scope>
    <source>
        <strain>ATCC 25618 / H37Rv</strain>
    </source>
</reference>
<comment type="miscellaneous">
    <text>Was identified as a high-confidence drug target.</text>
</comment>
<proteinExistence type="evidence at protein level"/>
<protein>
    <recommendedName>
        <fullName>Putative HTH-type transcriptional regulator Rv1287</fullName>
    </recommendedName>
</protein>